<comment type="function">
    <text evidence="2 3">Part of the tripartite efflux system EmrAB-TolC, which confers resistance to antibiotics such as CCCP, FCCP, 2,4-dinitrophenol and nalidixic acid. EmrA is a drug-binding protein that provides a physical link between EmrB and TolC.</text>
</comment>
<comment type="subunit">
    <text evidence="2 4 5">Homodimer and homotrimer. Part of the tripartite efflux system EmrAB-TolC, which is composed of an inner membrane transporter, EmrB, a periplasmic membrane fusion protein, EmrA, and an outer membrane component, TolC. The complex forms a large protein conduit and can translocate molecules across both the inner and outer membranes. Interacts with EmrB. EmrAB complex forms a dimer in vitro.</text>
</comment>
<comment type="interaction">
    <interactant intactId="EBI-1119547">
        <id>P27303</id>
    </interactant>
    <interactant intactId="EBI-1119547">
        <id>P27303</id>
        <label>emrA</label>
    </interactant>
    <organismsDiffer>false</organismsDiffer>
    <experiments>3</experiments>
</comment>
<comment type="interaction">
    <interactant intactId="EBI-1119547">
        <id>P27303</id>
    </interactant>
    <interactant intactId="EBI-21407519">
        <id>P0AEJ0</id>
        <label>emrB</label>
    </interactant>
    <organismsDiffer>false</organismsDiffer>
    <experiments>2</experiments>
</comment>
<comment type="subcellular location">
    <subcellularLocation>
        <location evidence="2 3">Cell inner membrane</location>
        <topology evidence="2 3">Single-pass membrane protein</topology>
        <orientation evidence="2 3">Periplasmic side</orientation>
    </subcellularLocation>
</comment>
<comment type="similarity">
    <text evidence="6">Belongs to the membrane fusion protein (MFP) (TC 8.A.1) family.</text>
</comment>
<reference key="1">
    <citation type="journal article" date="1992" name="Proc. Natl. Acad. Sci. U.S.A.">
        <title>Emr, an Escherichia coli locus for multidrug resistance.</title>
        <authorList>
            <person name="Lomovskaya O."/>
            <person name="Lewis K."/>
        </authorList>
    </citation>
    <scope>NUCLEOTIDE SEQUENCE [GENOMIC DNA]</scope>
    <scope>FUNCTION</scope>
    <scope>SUBCELLULAR LOCATION</scope>
</reference>
<reference key="2">
    <citation type="journal article" date="1997" name="DNA Res.">
        <title>Construction of a contiguous 874-kb sequence of the Escherichia coli-K12 genome corresponding to 50.0-68.8 min on the linkage map and analysis of its sequence features.</title>
        <authorList>
            <person name="Yamamoto Y."/>
            <person name="Aiba H."/>
            <person name="Baba T."/>
            <person name="Hayashi K."/>
            <person name="Inada T."/>
            <person name="Isono K."/>
            <person name="Itoh T."/>
            <person name="Kimura S."/>
            <person name="Kitagawa M."/>
            <person name="Makino K."/>
            <person name="Miki T."/>
            <person name="Mitsuhashi N."/>
            <person name="Mizobuchi K."/>
            <person name="Mori H."/>
            <person name="Nakade S."/>
            <person name="Nakamura Y."/>
            <person name="Nashimoto H."/>
            <person name="Oshima T."/>
            <person name="Oyama S."/>
            <person name="Saito N."/>
            <person name="Sampei G."/>
            <person name="Satoh Y."/>
            <person name="Sivasundaram S."/>
            <person name="Tagami H."/>
            <person name="Takahashi H."/>
            <person name="Takeda J."/>
            <person name="Takemoto K."/>
            <person name="Uehara K."/>
            <person name="Wada C."/>
            <person name="Yamagata S."/>
            <person name="Horiuchi T."/>
        </authorList>
    </citation>
    <scope>NUCLEOTIDE SEQUENCE [LARGE SCALE GENOMIC DNA]</scope>
    <source>
        <strain>K12 / W3110 / ATCC 27325 / DSM 5911</strain>
    </source>
</reference>
<reference key="3">
    <citation type="journal article" date="1997" name="Science">
        <title>The complete genome sequence of Escherichia coli K-12.</title>
        <authorList>
            <person name="Blattner F.R."/>
            <person name="Plunkett G. III"/>
            <person name="Bloch C.A."/>
            <person name="Perna N.T."/>
            <person name="Burland V."/>
            <person name="Riley M."/>
            <person name="Collado-Vides J."/>
            <person name="Glasner J.D."/>
            <person name="Rode C.K."/>
            <person name="Mayhew G.F."/>
            <person name="Gregor J."/>
            <person name="Davis N.W."/>
            <person name="Kirkpatrick H.A."/>
            <person name="Goeden M.A."/>
            <person name="Rose D.J."/>
            <person name="Mau B."/>
            <person name="Shao Y."/>
        </authorList>
    </citation>
    <scope>NUCLEOTIDE SEQUENCE [LARGE SCALE GENOMIC DNA]</scope>
    <source>
        <strain>K12 / MG1655 / ATCC 47076</strain>
    </source>
</reference>
<reference key="4">
    <citation type="journal article" date="2006" name="Mol. Syst. Biol.">
        <title>Highly accurate genome sequences of Escherichia coli K-12 strains MG1655 and W3110.</title>
        <authorList>
            <person name="Hayashi K."/>
            <person name="Morooka N."/>
            <person name="Yamamoto Y."/>
            <person name="Fujita K."/>
            <person name="Isono K."/>
            <person name="Choi S."/>
            <person name="Ohtsubo E."/>
            <person name="Baba T."/>
            <person name="Wanner B.L."/>
            <person name="Mori H."/>
            <person name="Horiuchi T."/>
        </authorList>
    </citation>
    <scope>NUCLEOTIDE SEQUENCE [LARGE SCALE GENOMIC DNA]</scope>
    <source>
        <strain>K12 / W3110 / ATCC 27325 / DSM 5911</strain>
    </source>
</reference>
<reference key="5">
    <citation type="journal article" date="1994" name="Trends Biochem. Sci.">
        <title>Multidrug resistance pumps in bacteria: variations on a theme.</title>
        <authorList>
            <person name="Lewis K."/>
        </authorList>
    </citation>
    <scope>REVIEW</scope>
</reference>
<reference key="6">
    <citation type="journal article" date="2003" name="J. Biol. Chem.">
        <title>Identification of oligomerization and drug-binding domains of the membrane fusion protein EmrA.</title>
        <authorList>
            <person name="Borges-Walmsley M.I."/>
            <person name="Beauchamp J."/>
            <person name="Kelly S.M."/>
            <person name="Jumel K."/>
            <person name="Candlish D."/>
            <person name="Harding S.E."/>
            <person name="Price N.C."/>
            <person name="Walmsley A.R."/>
        </authorList>
    </citation>
    <scope>FUNCTION</scope>
    <scope>SUBUNIT</scope>
    <scope>SUBCELLULAR LOCATION</scope>
</reference>
<reference key="7">
    <citation type="journal article" date="2009" name="Biochem. Biophys. Res. Commun.">
        <title>The multidrug resistance efflux complex, EmrAB from Escherichia coli forms a dimer in vitro.</title>
        <authorList>
            <person name="Tanabe M."/>
            <person name="Szakonyi G."/>
            <person name="Brown K.A."/>
            <person name="Henderson P.J."/>
            <person name="Nield J."/>
            <person name="Byrne B."/>
        </authorList>
    </citation>
    <scope>INTERACTION WITH EMRB</scope>
</reference>
<reference key="8">
    <citation type="journal article" date="2009" name="Proc. Natl. Acad. Sci. U.S.A.">
        <title>Kinetic control of TolC recruitment by multidrug efflux complexes.</title>
        <authorList>
            <person name="Tikhonova E.B."/>
            <person name="Dastidar V."/>
            <person name="Rybenkov V.V."/>
            <person name="Zgurskaya H.I."/>
        </authorList>
    </citation>
    <scope>INTERACTION WITH TOLC</scope>
</reference>
<keyword id="KW-0046">Antibiotic resistance</keyword>
<keyword id="KW-0997">Cell inner membrane</keyword>
<keyword id="KW-1003">Cell membrane</keyword>
<keyword id="KW-0175">Coiled coil</keyword>
<keyword id="KW-0472">Membrane</keyword>
<keyword id="KW-1185">Reference proteome</keyword>
<keyword id="KW-0812">Transmembrane</keyword>
<keyword id="KW-1133">Transmembrane helix</keyword>
<keyword id="KW-0813">Transport</keyword>
<protein>
    <recommendedName>
        <fullName>Multidrug export protein EmrA</fullName>
    </recommendedName>
</protein>
<organism>
    <name type="scientific">Escherichia coli (strain K12)</name>
    <dbReference type="NCBI Taxonomy" id="83333"/>
    <lineage>
        <taxon>Bacteria</taxon>
        <taxon>Pseudomonadati</taxon>
        <taxon>Pseudomonadota</taxon>
        <taxon>Gammaproteobacteria</taxon>
        <taxon>Enterobacterales</taxon>
        <taxon>Enterobacteriaceae</taxon>
        <taxon>Escherichia</taxon>
    </lineage>
</organism>
<dbReference type="EMBL" id="M86657">
    <property type="protein sequence ID" value="AAA23724.1"/>
    <property type="molecule type" value="Genomic_DNA"/>
</dbReference>
<dbReference type="EMBL" id="U00096">
    <property type="protein sequence ID" value="AAC75732.1"/>
    <property type="molecule type" value="Genomic_DNA"/>
</dbReference>
<dbReference type="EMBL" id="AP009048">
    <property type="protein sequence ID" value="BAA16547.1"/>
    <property type="molecule type" value="Genomic_DNA"/>
</dbReference>
<dbReference type="PIR" id="F65048">
    <property type="entry name" value="F65048"/>
</dbReference>
<dbReference type="RefSeq" id="NP_417170.1">
    <property type="nucleotide sequence ID" value="NC_000913.3"/>
</dbReference>
<dbReference type="RefSeq" id="WP_001326681.1">
    <property type="nucleotide sequence ID" value="NZ_LN832404.1"/>
</dbReference>
<dbReference type="BioGRID" id="4262946">
    <property type="interactions" value="221"/>
</dbReference>
<dbReference type="BioGRID" id="851498">
    <property type="interactions" value="1"/>
</dbReference>
<dbReference type="ComplexPortal" id="CPX-4268">
    <property type="entry name" value="EmrAB-TolC multidrug efflux transport system"/>
</dbReference>
<dbReference type="DIP" id="DIP-9502N"/>
<dbReference type="FunCoup" id="P27303">
    <property type="interactions" value="256"/>
</dbReference>
<dbReference type="IntAct" id="P27303">
    <property type="interactions" value="4"/>
</dbReference>
<dbReference type="STRING" id="511145.b2685"/>
<dbReference type="CARD" id="ARO:3000027">
    <property type="molecule name" value="emrA"/>
    <property type="mechanism identifier" value="ARO:0010000"/>
    <property type="mechanism name" value="antibiotic efflux"/>
</dbReference>
<dbReference type="TCDB" id="8.A.1.1.1">
    <property type="family name" value="the membrane fusion protein (mfp) family"/>
</dbReference>
<dbReference type="jPOST" id="P27303"/>
<dbReference type="PaxDb" id="511145-b2685"/>
<dbReference type="EnsemblBacteria" id="AAC75732">
    <property type="protein sequence ID" value="AAC75732"/>
    <property type="gene ID" value="b2685"/>
</dbReference>
<dbReference type="GeneID" id="947166"/>
<dbReference type="KEGG" id="ecj:JW2660"/>
<dbReference type="KEGG" id="eco:b2685"/>
<dbReference type="KEGG" id="ecoc:C3026_14785"/>
<dbReference type="PATRIC" id="fig|1411691.4.peg.4054"/>
<dbReference type="EchoBASE" id="EB1329"/>
<dbReference type="eggNOG" id="COG1566">
    <property type="taxonomic scope" value="Bacteria"/>
</dbReference>
<dbReference type="HOGENOM" id="CLU_018816_15_0_6"/>
<dbReference type="InParanoid" id="P27303"/>
<dbReference type="OMA" id="AYAGWDW"/>
<dbReference type="OrthoDB" id="9811754at2"/>
<dbReference type="PhylomeDB" id="P27303"/>
<dbReference type="BioCyc" id="EcoCyc:EG11354-MONOMER"/>
<dbReference type="BioCyc" id="MetaCyc:EG11354-MONOMER"/>
<dbReference type="PRO" id="PR:P27303"/>
<dbReference type="Proteomes" id="UP000000625">
    <property type="component" value="Chromosome"/>
</dbReference>
<dbReference type="GO" id="GO:1990281">
    <property type="term" value="C:efflux pump complex"/>
    <property type="evidence" value="ECO:0000303"/>
    <property type="project" value="ComplexPortal"/>
</dbReference>
<dbReference type="GO" id="GO:0030288">
    <property type="term" value="C:outer membrane-bounded periplasmic space"/>
    <property type="evidence" value="ECO:0000314"/>
    <property type="project" value="EcoCyc"/>
</dbReference>
<dbReference type="GO" id="GO:0098567">
    <property type="term" value="C:periplasmic side of plasma membrane"/>
    <property type="evidence" value="ECO:0000303"/>
    <property type="project" value="ComplexPortal"/>
</dbReference>
<dbReference type="GO" id="GO:0005886">
    <property type="term" value="C:plasma membrane"/>
    <property type="evidence" value="ECO:0000314"/>
    <property type="project" value="EcoCyc"/>
</dbReference>
<dbReference type="GO" id="GO:0015125">
    <property type="term" value="F:bile acid transmembrane transporter activity"/>
    <property type="evidence" value="ECO:0000269"/>
    <property type="project" value="EcoCyc"/>
</dbReference>
<dbReference type="GO" id="GO:0042802">
    <property type="term" value="F:identical protein binding"/>
    <property type="evidence" value="ECO:0000353"/>
    <property type="project" value="IntAct"/>
</dbReference>
<dbReference type="GO" id="GO:0042910">
    <property type="term" value="F:xenobiotic transmembrane transporter activity"/>
    <property type="evidence" value="ECO:0007669"/>
    <property type="project" value="InterPro"/>
</dbReference>
<dbReference type="GO" id="GO:0015721">
    <property type="term" value="P:bile acid and bile salt transport"/>
    <property type="evidence" value="ECO:0000269"/>
    <property type="project" value="EcoCyc"/>
</dbReference>
<dbReference type="GO" id="GO:0046677">
    <property type="term" value="P:response to antibiotic"/>
    <property type="evidence" value="ECO:0000315"/>
    <property type="project" value="EcoCyc"/>
</dbReference>
<dbReference type="GO" id="GO:0048545">
    <property type="term" value="P:response to steroid hormone"/>
    <property type="evidence" value="ECO:0000269"/>
    <property type="project" value="EcoCyc"/>
</dbReference>
<dbReference type="GO" id="GO:0009636">
    <property type="term" value="P:response to toxic substance"/>
    <property type="evidence" value="ECO:0000315"/>
    <property type="project" value="EcoCyc"/>
</dbReference>
<dbReference type="GO" id="GO:0140330">
    <property type="term" value="P:xenobiotic detoxification by transmembrane export across the cell outer membrane"/>
    <property type="evidence" value="ECO:0000303"/>
    <property type="project" value="ComplexPortal"/>
</dbReference>
<dbReference type="GO" id="GO:1990961">
    <property type="term" value="P:xenobiotic detoxification by transmembrane export across the plasma membrane"/>
    <property type="evidence" value="ECO:0000315"/>
    <property type="project" value="EcoCyc"/>
</dbReference>
<dbReference type="FunFam" id="2.40.30.170:FF:000003">
    <property type="entry name" value="Multidrug resistance protein A"/>
    <property type="match status" value="1"/>
</dbReference>
<dbReference type="Gene3D" id="2.40.30.170">
    <property type="match status" value="1"/>
</dbReference>
<dbReference type="Gene3D" id="2.40.50.100">
    <property type="match status" value="1"/>
</dbReference>
<dbReference type="Gene3D" id="1.10.287.470">
    <property type="entry name" value="Helix hairpin bin"/>
    <property type="match status" value="1"/>
</dbReference>
<dbReference type="InterPro" id="IPR043602">
    <property type="entry name" value="CusB-like_dom_1"/>
</dbReference>
<dbReference type="InterPro" id="IPR032317">
    <property type="entry name" value="CusB_D23"/>
</dbReference>
<dbReference type="InterPro" id="IPR050739">
    <property type="entry name" value="MFP"/>
</dbReference>
<dbReference type="InterPro" id="IPR005694">
    <property type="entry name" value="MFP_proteobact"/>
</dbReference>
<dbReference type="NCBIfam" id="TIGR00998">
    <property type="entry name" value="8a0101"/>
    <property type="match status" value="1"/>
</dbReference>
<dbReference type="NCBIfam" id="NF011715">
    <property type="entry name" value="PRK15136.1"/>
    <property type="match status" value="1"/>
</dbReference>
<dbReference type="PANTHER" id="PTHR30386">
    <property type="entry name" value="MEMBRANE FUSION SUBUNIT OF EMRAB-TOLC MULTIDRUG EFFLUX PUMP"/>
    <property type="match status" value="1"/>
</dbReference>
<dbReference type="PANTHER" id="PTHR30386:SF19">
    <property type="entry name" value="MULTIDRUG EXPORT PROTEIN EMRA-RELATED"/>
    <property type="match status" value="1"/>
</dbReference>
<dbReference type="Pfam" id="PF00529">
    <property type="entry name" value="CusB_dom_1"/>
    <property type="match status" value="1"/>
</dbReference>
<dbReference type="Pfam" id="PF16576">
    <property type="entry name" value="HlyD_D23"/>
    <property type="match status" value="1"/>
</dbReference>
<dbReference type="SUPFAM" id="SSF111369">
    <property type="entry name" value="HlyD-like secretion proteins"/>
    <property type="match status" value="2"/>
</dbReference>
<gene>
    <name type="primary">emrA</name>
    <name type="ordered locus">b2685</name>
    <name type="ordered locus">JW2660</name>
</gene>
<proteinExistence type="evidence at protein level"/>
<evidence type="ECO:0000255" key="1"/>
<evidence type="ECO:0000269" key="2">
    <source>
    </source>
</evidence>
<evidence type="ECO:0000269" key="3">
    <source>
    </source>
</evidence>
<evidence type="ECO:0000269" key="4">
    <source>
    </source>
</evidence>
<evidence type="ECO:0000269" key="5">
    <source>
    </source>
</evidence>
<evidence type="ECO:0000305" key="6"/>
<sequence>MSANAETQTPQQPVKKSGKRKRLLLLLTLLFIIIAVAIGIYWFLVLRHFEETDDAYVAGNQIQIMSQVSGSVTKVWADNTDFVKEGDVLVTLDPTDARQAFEKAKTALASSVRQTHQLMINSKQLQANIEVQKIALAKAQSDYNRRVPLGNANLIGREELQHARDAVTSAQAQLDVAIQQYNANQAMILGTKLEDQPAVQQAATEVRNAWLALERTRIISPMTGYVSRRAVQPGAQISPTTPLMAVVPATNMWVDANFKETQIANMRIGQPVTITTDIYGDDVKYTGKVVGLDMGTGSAFSLLPAQNATGNWIKVVQRLPVRIELDQKQLEQYPLRIGLSTLVSVNTTNRDGQVLANKVRSTPVAVSTAREISLAPVNKLIDDIVKANAG</sequence>
<accession>P27303</accession>
<accession>P77356</accession>
<feature type="chain" id="PRO_0000201869" description="Multidrug export protein EmrA">
    <location>
        <begin position="1"/>
        <end position="390"/>
    </location>
</feature>
<feature type="topological domain" description="Cytoplasmic" evidence="1">
    <location>
        <begin position="1"/>
        <end position="24"/>
    </location>
</feature>
<feature type="transmembrane region" description="Helical" evidence="1">
    <location>
        <begin position="25"/>
        <end position="45"/>
    </location>
</feature>
<feature type="topological domain" description="Periplasmic" evidence="1">
    <location>
        <begin position="46"/>
        <end position="390"/>
    </location>
</feature>
<feature type="coiled-coil region" evidence="1">
    <location>
        <begin position="120"/>
        <end position="180"/>
    </location>
</feature>
<feature type="sequence conflict" description="In Ref. 1; AAA23724." evidence="6" ref="1">
    <original>I</original>
    <variation>M</variation>
    <location>
        <position position="62"/>
    </location>
</feature>
<feature type="sequence conflict" description="In Ref. 1; AAA23724." evidence="6" ref="1">
    <original>K</original>
    <variation>Q</variation>
    <location>
        <position position="138"/>
    </location>
</feature>
<name>EMRA_ECOLI</name>